<evidence type="ECO:0000255" key="1">
    <source>
        <dbReference type="HAMAP-Rule" id="MF_01595"/>
    </source>
</evidence>
<evidence type="ECO:0000256" key="2">
    <source>
        <dbReference type="SAM" id="MobiDB-lite"/>
    </source>
</evidence>
<organism>
    <name type="scientific">Bifidobacterium animalis subsp. lactis (strain AD011)</name>
    <dbReference type="NCBI Taxonomy" id="442563"/>
    <lineage>
        <taxon>Bacteria</taxon>
        <taxon>Bacillati</taxon>
        <taxon>Actinomycetota</taxon>
        <taxon>Actinomycetes</taxon>
        <taxon>Bifidobacteriales</taxon>
        <taxon>Bifidobacteriaceae</taxon>
        <taxon>Bifidobacterium</taxon>
    </lineage>
</organism>
<keyword id="KW-0963">Cytoplasm</keyword>
<keyword id="KW-0460">Magnesium</keyword>
<keyword id="KW-0479">Metal-binding</keyword>
<keyword id="KW-0548">Nucleotidyltransferase</keyword>
<keyword id="KW-1185">Reference proteome</keyword>
<keyword id="KW-0694">RNA-binding</keyword>
<keyword id="KW-0808">Transferase</keyword>
<gene>
    <name evidence="1" type="primary">pnp</name>
    <name type="ordered locus">BLA_0307</name>
</gene>
<accession>B8DVV8</accession>
<protein>
    <recommendedName>
        <fullName evidence="1">Polyribonucleotide nucleotidyltransferase</fullName>
        <ecNumber evidence="1">2.7.7.8</ecNumber>
    </recommendedName>
    <alternativeName>
        <fullName evidence="1">Polynucleotide phosphorylase</fullName>
        <shortName evidence="1">PNPase</shortName>
    </alternativeName>
</protein>
<comment type="function">
    <text evidence="1">Involved in mRNA degradation. Catalyzes the phosphorolysis of single-stranded polyribonucleotides processively in the 3'- to 5'-direction.</text>
</comment>
<comment type="catalytic activity">
    <reaction evidence="1">
        <text>RNA(n+1) + phosphate = RNA(n) + a ribonucleoside 5'-diphosphate</text>
        <dbReference type="Rhea" id="RHEA:22096"/>
        <dbReference type="Rhea" id="RHEA-COMP:14527"/>
        <dbReference type="Rhea" id="RHEA-COMP:17342"/>
        <dbReference type="ChEBI" id="CHEBI:43474"/>
        <dbReference type="ChEBI" id="CHEBI:57930"/>
        <dbReference type="ChEBI" id="CHEBI:140395"/>
        <dbReference type="EC" id="2.7.7.8"/>
    </reaction>
</comment>
<comment type="cofactor">
    <cofactor evidence="1">
        <name>Mg(2+)</name>
        <dbReference type="ChEBI" id="CHEBI:18420"/>
    </cofactor>
</comment>
<comment type="subcellular location">
    <subcellularLocation>
        <location evidence="1">Cytoplasm</location>
    </subcellularLocation>
</comment>
<comment type="similarity">
    <text evidence="1">Belongs to the polyribonucleotide nucleotidyltransferase family.</text>
</comment>
<reference key="1">
    <citation type="journal article" date="2009" name="J. Bacteriol.">
        <title>Genome sequence of the probiotic bacterium Bifidobacterium animalis subsp. lactis AD011.</title>
        <authorList>
            <person name="Kim J.F."/>
            <person name="Jeong H."/>
            <person name="Yu D.S."/>
            <person name="Choi S.-H."/>
            <person name="Hur C.-G."/>
            <person name="Park M.-S."/>
            <person name="Yoon S.H."/>
            <person name="Kim D.-W."/>
            <person name="Ji G.E."/>
            <person name="Park H.-S."/>
            <person name="Oh T.K."/>
        </authorList>
    </citation>
    <scope>NUCLEOTIDE SEQUENCE [LARGE SCALE GENOMIC DNA]</scope>
    <source>
        <strain>AD011</strain>
    </source>
</reference>
<dbReference type="EC" id="2.7.7.8" evidence="1"/>
<dbReference type="EMBL" id="CP001213">
    <property type="protein sequence ID" value="ACL28609.1"/>
    <property type="molecule type" value="Genomic_DNA"/>
</dbReference>
<dbReference type="RefSeq" id="WP_004268467.1">
    <property type="nucleotide sequence ID" value="NC_011835.1"/>
</dbReference>
<dbReference type="SMR" id="B8DVV8"/>
<dbReference type="STRING" id="442563.BLA_0307"/>
<dbReference type="KEGG" id="bla:BLA_0307"/>
<dbReference type="HOGENOM" id="CLU_004217_2_2_11"/>
<dbReference type="Proteomes" id="UP000002456">
    <property type="component" value="Chromosome"/>
</dbReference>
<dbReference type="GO" id="GO:0005829">
    <property type="term" value="C:cytosol"/>
    <property type="evidence" value="ECO:0007669"/>
    <property type="project" value="TreeGrafter"/>
</dbReference>
<dbReference type="GO" id="GO:0000175">
    <property type="term" value="F:3'-5'-RNA exonuclease activity"/>
    <property type="evidence" value="ECO:0007669"/>
    <property type="project" value="TreeGrafter"/>
</dbReference>
<dbReference type="GO" id="GO:0000287">
    <property type="term" value="F:magnesium ion binding"/>
    <property type="evidence" value="ECO:0007669"/>
    <property type="project" value="UniProtKB-UniRule"/>
</dbReference>
<dbReference type="GO" id="GO:0004654">
    <property type="term" value="F:polyribonucleotide nucleotidyltransferase activity"/>
    <property type="evidence" value="ECO:0007669"/>
    <property type="project" value="UniProtKB-UniRule"/>
</dbReference>
<dbReference type="GO" id="GO:0003723">
    <property type="term" value="F:RNA binding"/>
    <property type="evidence" value="ECO:0007669"/>
    <property type="project" value="UniProtKB-UniRule"/>
</dbReference>
<dbReference type="GO" id="GO:0006402">
    <property type="term" value="P:mRNA catabolic process"/>
    <property type="evidence" value="ECO:0007669"/>
    <property type="project" value="UniProtKB-UniRule"/>
</dbReference>
<dbReference type="GO" id="GO:0006396">
    <property type="term" value="P:RNA processing"/>
    <property type="evidence" value="ECO:0007669"/>
    <property type="project" value="InterPro"/>
</dbReference>
<dbReference type="CDD" id="cd02393">
    <property type="entry name" value="KH-I_PNPase"/>
    <property type="match status" value="1"/>
</dbReference>
<dbReference type="CDD" id="cd11364">
    <property type="entry name" value="RNase_PH_PNPase_2"/>
    <property type="match status" value="1"/>
</dbReference>
<dbReference type="CDD" id="cd04472">
    <property type="entry name" value="S1_PNPase"/>
    <property type="match status" value="1"/>
</dbReference>
<dbReference type="FunFam" id="3.30.1370.10:FF:000001">
    <property type="entry name" value="Polyribonucleotide nucleotidyltransferase"/>
    <property type="match status" value="1"/>
</dbReference>
<dbReference type="FunFam" id="3.30.230.70:FF:000001">
    <property type="entry name" value="Polyribonucleotide nucleotidyltransferase"/>
    <property type="match status" value="1"/>
</dbReference>
<dbReference type="FunFam" id="3.30.230.70:FF:000002">
    <property type="entry name" value="Polyribonucleotide nucleotidyltransferase"/>
    <property type="match status" value="1"/>
</dbReference>
<dbReference type="Gene3D" id="3.30.230.70">
    <property type="entry name" value="GHMP Kinase, N-terminal domain"/>
    <property type="match status" value="2"/>
</dbReference>
<dbReference type="Gene3D" id="3.30.1370.10">
    <property type="entry name" value="K Homology domain, type 1"/>
    <property type="match status" value="1"/>
</dbReference>
<dbReference type="Gene3D" id="2.40.50.140">
    <property type="entry name" value="Nucleic acid-binding proteins"/>
    <property type="match status" value="1"/>
</dbReference>
<dbReference type="HAMAP" id="MF_01595">
    <property type="entry name" value="PNPase"/>
    <property type="match status" value="1"/>
</dbReference>
<dbReference type="InterPro" id="IPR001247">
    <property type="entry name" value="ExoRNase_PH_dom1"/>
</dbReference>
<dbReference type="InterPro" id="IPR036345">
    <property type="entry name" value="ExoRNase_PH_dom2_sf"/>
</dbReference>
<dbReference type="InterPro" id="IPR014069">
    <property type="entry name" value="GPSI/PNP"/>
</dbReference>
<dbReference type="InterPro" id="IPR004087">
    <property type="entry name" value="KH_dom"/>
</dbReference>
<dbReference type="InterPro" id="IPR004088">
    <property type="entry name" value="KH_dom_type_1"/>
</dbReference>
<dbReference type="InterPro" id="IPR036612">
    <property type="entry name" value="KH_dom_type_1_sf"/>
</dbReference>
<dbReference type="InterPro" id="IPR012340">
    <property type="entry name" value="NA-bd_OB-fold"/>
</dbReference>
<dbReference type="InterPro" id="IPR012162">
    <property type="entry name" value="PNPase"/>
</dbReference>
<dbReference type="InterPro" id="IPR027408">
    <property type="entry name" value="PNPase/RNase_PH_dom_sf"/>
</dbReference>
<dbReference type="InterPro" id="IPR015848">
    <property type="entry name" value="PNPase_PH_RNA-bd_bac/org-type"/>
</dbReference>
<dbReference type="InterPro" id="IPR036456">
    <property type="entry name" value="PNPase_PH_RNA-bd_sf"/>
</dbReference>
<dbReference type="InterPro" id="IPR020568">
    <property type="entry name" value="Ribosomal_Su5_D2-typ_SF"/>
</dbReference>
<dbReference type="InterPro" id="IPR003029">
    <property type="entry name" value="S1_domain"/>
</dbReference>
<dbReference type="NCBIfam" id="TIGR03591">
    <property type="entry name" value="polynuc_phos"/>
    <property type="match status" value="1"/>
</dbReference>
<dbReference type="NCBIfam" id="TIGR02696">
    <property type="entry name" value="pppGpp_PNP"/>
    <property type="match status" value="1"/>
</dbReference>
<dbReference type="NCBIfam" id="NF008805">
    <property type="entry name" value="PRK11824.1"/>
    <property type="match status" value="1"/>
</dbReference>
<dbReference type="PANTHER" id="PTHR11252">
    <property type="entry name" value="POLYRIBONUCLEOTIDE NUCLEOTIDYLTRANSFERASE"/>
    <property type="match status" value="1"/>
</dbReference>
<dbReference type="PANTHER" id="PTHR11252:SF0">
    <property type="entry name" value="POLYRIBONUCLEOTIDE NUCLEOTIDYLTRANSFERASE 1, MITOCHONDRIAL"/>
    <property type="match status" value="1"/>
</dbReference>
<dbReference type="Pfam" id="PF00013">
    <property type="entry name" value="KH_1"/>
    <property type="match status" value="1"/>
</dbReference>
<dbReference type="Pfam" id="PF03726">
    <property type="entry name" value="PNPase"/>
    <property type="match status" value="1"/>
</dbReference>
<dbReference type="Pfam" id="PF01138">
    <property type="entry name" value="RNase_PH"/>
    <property type="match status" value="2"/>
</dbReference>
<dbReference type="Pfam" id="PF00575">
    <property type="entry name" value="S1"/>
    <property type="match status" value="1"/>
</dbReference>
<dbReference type="SMART" id="SM00322">
    <property type="entry name" value="KH"/>
    <property type="match status" value="1"/>
</dbReference>
<dbReference type="SMART" id="SM00316">
    <property type="entry name" value="S1"/>
    <property type="match status" value="1"/>
</dbReference>
<dbReference type="SUPFAM" id="SSF54791">
    <property type="entry name" value="Eukaryotic type KH-domain (KH-domain type I)"/>
    <property type="match status" value="1"/>
</dbReference>
<dbReference type="SUPFAM" id="SSF50249">
    <property type="entry name" value="Nucleic acid-binding proteins"/>
    <property type="match status" value="1"/>
</dbReference>
<dbReference type="SUPFAM" id="SSF46915">
    <property type="entry name" value="Polynucleotide phosphorylase/guanosine pentaphosphate synthase (PNPase/GPSI), domain 3"/>
    <property type="match status" value="1"/>
</dbReference>
<dbReference type="SUPFAM" id="SSF55666">
    <property type="entry name" value="Ribonuclease PH domain 2-like"/>
    <property type="match status" value="2"/>
</dbReference>
<dbReference type="SUPFAM" id="SSF54211">
    <property type="entry name" value="Ribosomal protein S5 domain 2-like"/>
    <property type="match status" value="2"/>
</dbReference>
<dbReference type="PROSITE" id="PS50084">
    <property type="entry name" value="KH_TYPE_1"/>
    <property type="match status" value="1"/>
</dbReference>
<dbReference type="PROSITE" id="PS50126">
    <property type="entry name" value="S1"/>
    <property type="match status" value="1"/>
</dbReference>
<name>PNP_BIFA0</name>
<feature type="chain" id="PRO_1000185723" description="Polyribonucleotide nucleotidyltransferase">
    <location>
        <begin position="1"/>
        <end position="873"/>
    </location>
</feature>
<feature type="domain" description="KH" evidence="1">
    <location>
        <begin position="587"/>
        <end position="646"/>
    </location>
</feature>
<feature type="domain" description="S1 motif" evidence="1">
    <location>
        <begin position="658"/>
        <end position="730"/>
    </location>
</feature>
<feature type="region of interest" description="Disordered" evidence="2">
    <location>
        <begin position="727"/>
        <end position="873"/>
    </location>
</feature>
<feature type="compositionally biased region" description="Basic and acidic residues" evidence="2">
    <location>
        <begin position="742"/>
        <end position="857"/>
    </location>
</feature>
<feature type="binding site" evidence="1">
    <location>
        <position position="521"/>
    </location>
    <ligand>
        <name>Mg(2+)</name>
        <dbReference type="ChEBI" id="CHEBI:18420"/>
    </ligand>
</feature>
<feature type="binding site" evidence="1">
    <location>
        <position position="527"/>
    </location>
    <ligand>
        <name>Mg(2+)</name>
        <dbReference type="ChEBI" id="CHEBI:18420"/>
    </ligand>
</feature>
<sequence>MEGPEIKAVEAVIDNGSFGRRTVRFETGRLARQADGAVAAYLDDDSMVLSTTTAGSSPKENYDFFPLTVDVEEKMYAAGKIPGSFFRREGRPSSEAILACRIIDRPLRPLFPHTLRNEVQVVETVLAVNPEDSYDVLALNAASASTLISGLPFTGPVGGVRLALIDGQWVAFPRWSERERAVFEIVVAGRVVESGDVAIAMIEAGAGKNAWNLIYDEGQQKPDEEVVAGGLEAAKPFIKVLCDAQNELKRLAAKETREFTLFPEYTDDLYNRIDEIAHADLDEALSIAEKLPRQERIAEIKQRVKDTLSVEFTDMDEMEKDKEIGNAFKELQRQIVRRRILTQDYRIDGRGLRDIRTLSAEIDVVPRVHGSALFQRGETQILGITTLNMLKMEQQIDALSGPTTKRYMHNYEMPPYSTGETGRVGSPKRREIGHGALAEKAIVPVLPSREEFPYAIRQVSEAIGSNGSTSMGSVCASTLSLLAAGVPLKAPVAGIAMGLVSGDVDGQHIYKTLTDILGAEDAFGDMDFKVAGTADFITALQLDTKLDGIPADVLAGALKQAHEARKTILEVINECIDGPAEMSPFAPRIITTTVPVDKIGEVIGPKGKMINQIQEDTGAEIAIEDDGTVYISSEGGEAAEKAKQIIDEIANPHVPQAGETYKGTVVKTTSFGAFVNLTPGIDGLLHISQIRNLADGQRIDAVEDVLKEGDSVEVVVQGVDDRGKISLAIPGFENQENNAGGRRSDDRPRRDDRRHSDDRRRDDRPRRRSDDRDRDYDDRPRRRRDYDDDRDYDDRPRRRSHRDYDDDRDYDDRPRRSDRRRDYDDDRPRRRRNDDRNPRYVADENYDEYREGREVRHERPRRRVRRDFDPFDD</sequence>
<proteinExistence type="inferred from homology"/>